<protein>
    <recommendedName>
        <fullName evidence="1">Maturase K</fullName>
    </recommendedName>
    <alternativeName>
        <fullName evidence="1">Intron maturase</fullName>
    </alternativeName>
</protein>
<keyword id="KW-0150">Chloroplast</keyword>
<keyword id="KW-0507">mRNA processing</keyword>
<keyword id="KW-0934">Plastid</keyword>
<keyword id="KW-0694">RNA-binding</keyword>
<keyword id="KW-0819">tRNA processing</keyword>
<feature type="chain" id="PRO_0000143501" description="Maturase K">
    <location>
        <begin position="1"/>
        <end position="520"/>
    </location>
</feature>
<dbReference type="EMBL" id="AB029770">
    <property type="protein sequence ID" value="BAA83277.1"/>
    <property type="molecule type" value="Genomic_DNA"/>
</dbReference>
<dbReference type="RefSeq" id="YP_009510190.1">
    <property type="nucleotide sequence ID" value="NC_039133.1"/>
</dbReference>
<dbReference type="GeneID" id="37622358"/>
<dbReference type="GO" id="GO:0009507">
    <property type="term" value="C:chloroplast"/>
    <property type="evidence" value="ECO:0007669"/>
    <property type="project" value="UniProtKB-SubCell"/>
</dbReference>
<dbReference type="GO" id="GO:0003723">
    <property type="term" value="F:RNA binding"/>
    <property type="evidence" value="ECO:0007669"/>
    <property type="project" value="UniProtKB-KW"/>
</dbReference>
<dbReference type="GO" id="GO:0006397">
    <property type="term" value="P:mRNA processing"/>
    <property type="evidence" value="ECO:0007669"/>
    <property type="project" value="UniProtKB-KW"/>
</dbReference>
<dbReference type="GO" id="GO:0008380">
    <property type="term" value="P:RNA splicing"/>
    <property type="evidence" value="ECO:0007669"/>
    <property type="project" value="UniProtKB-UniRule"/>
</dbReference>
<dbReference type="GO" id="GO:0008033">
    <property type="term" value="P:tRNA processing"/>
    <property type="evidence" value="ECO:0007669"/>
    <property type="project" value="UniProtKB-KW"/>
</dbReference>
<dbReference type="HAMAP" id="MF_01390">
    <property type="entry name" value="MatK"/>
    <property type="match status" value="1"/>
</dbReference>
<dbReference type="InterPro" id="IPR024937">
    <property type="entry name" value="Domain_X"/>
</dbReference>
<dbReference type="InterPro" id="IPR002866">
    <property type="entry name" value="Maturase_MatK"/>
</dbReference>
<dbReference type="InterPro" id="IPR024942">
    <property type="entry name" value="Maturase_MatK_N"/>
</dbReference>
<dbReference type="PANTHER" id="PTHR34811">
    <property type="entry name" value="MATURASE K"/>
    <property type="match status" value="1"/>
</dbReference>
<dbReference type="PANTHER" id="PTHR34811:SF1">
    <property type="entry name" value="MATURASE K"/>
    <property type="match status" value="1"/>
</dbReference>
<dbReference type="Pfam" id="PF01348">
    <property type="entry name" value="Intron_maturas2"/>
    <property type="match status" value="1"/>
</dbReference>
<dbReference type="Pfam" id="PF01824">
    <property type="entry name" value="MatK_N"/>
    <property type="match status" value="1"/>
</dbReference>
<evidence type="ECO:0000255" key="1">
    <source>
        <dbReference type="HAMAP-Rule" id="MF_01390"/>
    </source>
</evidence>
<sequence length="520" mass="62609">MEELQGYLEKDRSRQQHFLYPLLFQEYIYALAHNHGLNGSIFYEPVEVFGYDNKSSLVLVKRLITRIYQQNFLISLVNDSNQNRFVGYNHNNFFFSHFHSQMISESFAIIVEIPFSLRLVSYFEEKEIPKYHNLRSIHSIFPFLEDKLSHLNYVSDILIPHPIHMEILVQILQCWIQDVPFLHLLRFFLHEYHNLNSLLITQKKSIYVFSKENKRLFRFLYNSYVFEWEFLLVFIRKQSSYLRLISSGTFLERIHFYEKMEHLQMEHFVVVCRNYFHRTLWFCKDSFMHYVRYQGKAILASKGTHLLMKKWKYHFFNFWQYYFHVWSQPYRIHINQLSNYSFYFLGYLSSLLLNLSAVRNQMLENSFLIDTITKKFDTIVPVIFLIGSLAKAQFCTVSGHPISKPIWADLSDSDILDRFGRICRNISHYHSGSSKKQGLYRIKYILRLSCARTLARKHKSTVRTFLRRLGSGLLEEFFTEEEQVLSLIFPKTTPFILHRSHRERIWYLDIIRINDLVNHS</sequence>
<organism>
    <name type="scientific">Maianthemum dilatatum</name>
    <name type="common">False lily-of-the-valley</name>
    <dbReference type="NCBI Taxonomy" id="34193"/>
    <lineage>
        <taxon>Eukaryota</taxon>
        <taxon>Viridiplantae</taxon>
        <taxon>Streptophyta</taxon>
        <taxon>Embryophyta</taxon>
        <taxon>Tracheophyta</taxon>
        <taxon>Spermatophyta</taxon>
        <taxon>Magnoliopsida</taxon>
        <taxon>Liliopsida</taxon>
        <taxon>Asparagales</taxon>
        <taxon>Asparagaceae</taxon>
        <taxon>Nolinoideae</taxon>
        <taxon>Maianthemum</taxon>
    </lineage>
</organism>
<proteinExistence type="inferred from homology"/>
<geneLocation type="chloroplast"/>
<comment type="function">
    <text evidence="1">Usually encoded in the trnK tRNA gene intron. Probably assists in splicing its own and other chloroplast group II introns.</text>
</comment>
<comment type="subcellular location">
    <subcellularLocation>
        <location>Plastid</location>
        <location>Chloroplast</location>
    </subcellularLocation>
</comment>
<comment type="similarity">
    <text evidence="1">Belongs to the intron maturase 2 family. MatK subfamily.</text>
</comment>
<name>MATK_MAIDI</name>
<reference key="1">
    <citation type="book" date="2000" name="Monocots: systematics and evolution">
        <title>Molecular phylogeny of the Convallariaceae (Asparagales).</title>
        <editorList>
            <person name="Wilson K.L."/>
            <person name="Morrison D.A."/>
        </editorList>
        <authorList>
            <person name="Yamashita J."/>
            <person name="Tamura M.N."/>
        </authorList>
    </citation>
    <scope>NUCLEOTIDE SEQUENCE [GENOMIC DNA]</scope>
</reference>
<gene>
    <name evidence="1" type="primary">matK</name>
</gene>
<accession>Q9TNB2</accession>